<accession>B7NH38</accession>
<evidence type="ECO:0000255" key="1">
    <source>
        <dbReference type="HAMAP-Rule" id="MF_01862"/>
    </source>
</evidence>
<gene>
    <name evidence="1" type="primary">rsmC</name>
    <name type="ordered locus">ECUMN_4994</name>
</gene>
<reference key="1">
    <citation type="journal article" date="2009" name="PLoS Genet.">
        <title>Organised genome dynamics in the Escherichia coli species results in highly diverse adaptive paths.</title>
        <authorList>
            <person name="Touchon M."/>
            <person name="Hoede C."/>
            <person name="Tenaillon O."/>
            <person name="Barbe V."/>
            <person name="Baeriswyl S."/>
            <person name="Bidet P."/>
            <person name="Bingen E."/>
            <person name="Bonacorsi S."/>
            <person name="Bouchier C."/>
            <person name="Bouvet O."/>
            <person name="Calteau A."/>
            <person name="Chiapello H."/>
            <person name="Clermont O."/>
            <person name="Cruveiller S."/>
            <person name="Danchin A."/>
            <person name="Diard M."/>
            <person name="Dossat C."/>
            <person name="Karoui M.E."/>
            <person name="Frapy E."/>
            <person name="Garry L."/>
            <person name="Ghigo J.M."/>
            <person name="Gilles A.M."/>
            <person name="Johnson J."/>
            <person name="Le Bouguenec C."/>
            <person name="Lescat M."/>
            <person name="Mangenot S."/>
            <person name="Martinez-Jehanne V."/>
            <person name="Matic I."/>
            <person name="Nassif X."/>
            <person name="Oztas S."/>
            <person name="Petit M.A."/>
            <person name="Pichon C."/>
            <person name="Rouy Z."/>
            <person name="Ruf C.S."/>
            <person name="Schneider D."/>
            <person name="Tourret J."/>
            <person name="Vacherie B."/>
            <person name="Vallenet D."/>
            <person name="Medigue C."/>
            <person name="Rocha E.P.C."/>
            <person name="Denamur E."/>
        </authorList>
    </citation>
    <scope>NUCLEOTIDE SEQUENCE [LARGE SCALE GENOMIC DNA]</scope>
    <source>
        <strain>UMN026 / ExPEC</strain>
    </source>
</reference>
<sequence length="343" mass="37640">MSAFTPASEVLLRHSDDFEQSRILFAGDLQDDLPARLDTAASRAHTQQFHHWQVLSRQMGDNARFSLVATADDVADCNTLIYYWPKNKPEAQFQLMNLLSLLPVGTDIFVVGENRSGVRSAEQMLADYAPLNKVDSARRCGLYFGRLEKQPEFDADKFWGEYSVDGLTVKTLPGVFSRDGLDVGSQLLLSTLTPHTKGKVLDVGCGAGVLSVAFARHSPKIRLTLCDVSAPAVEASRATLAANGVEGEVFASNVFSEVKGRFDMIISNPPFHDGMQTSLDAAQTLIRGAVRHLNSGGELRIVANAFLPYPDVLDETFGFHEVIAQTGRFKVYRAIMTRQAKKG</sequence>
<dbReference type="EC" id="2.1.1.172" evidence="1"/>
<dbReference type="EMBL" id="CU928163">
    <property type="protein sequence ID" value="CAR16103.1"/>
    <property type="molecule type" value="Genomic_DNA"/>
</dbReference>
<dbReference type="RefSeq" id="WP_001272335.1">
    <property type="nucleotide sequence ID" value="NC_011751.1"/>
</dbReference>
<dbReference type="RefSeq" id="YP_002415567.1">
    <property type="nucleotide sequence ID" value="NC_011751.1"/>
</dbReference>
<dbReference type="SMR" id="B7NH38"/>
<dbReference type="STRING" id="585056.ECUMN_4994"/>
<dbReference type="KEGG" id="eum:ECUMN_4994"/>
<dbReference type="PATRIC" id="fig|585056.7.peg.5157"/>
<dbReference type="HOGENOM" id="CLU_049581_0_1_6"/>
<dbReference type="Proteomes" id="UP000007097">
    <property type="component" value="Chromosome"/>
</dbReference>
<dbReference type="GO" id="GO:0005737">
    <property type="term" value="C:cytoplasm"/>
    <property type="evidence" value="ECO:0007669"/>
    <property type="project" value="UniProtKB-SubCell"/>
</dbReference>
<dbReference type="GO" id="GO:0052914">
    <property type="term" value="F:16S rRNA (guanine(1207)-N(2))-methyltransferase activity"/>
    <property type="evidence" value="ECO:0007669"/>
    <property type="project" value="UniProtKB-EC"/>
</dbReference>
<dbReference type="GO" id="GO:0003676">
    <property type="term" value="F:nucleic acid binding"/>
    <property type="evidence" value="ECO:0007669"/>
    <property type="project" value="InterPro"/>
</dbReference>
<dbReference type="CDD" id="cd02440">
    <property type="entry name" value="AdoMet_MTases"/>
    <property type="match status" value="1"/>
</dbReference>
<dbReference type="FunFam" id="3.40.50.150:FF:000058">
    <property type="entry name" value="Ribosomal RNA small subunit methyltransferase C"/>
    <property type="match status" value="1"/>
</dbReference>
<dbReference type="FunFam" id="3.40.50.150:FF:000063">
    <property type="entry name" value="Ribosomal RNA small subunit methyltransferase C"/>
    <property type="match status" value="1"/>
</dbReference>
<dbReference type="Gene3D" id="3.40.50.150">
    <property type="entry name" value="Vaccinia Virus protein VP39"/>
    <property type="match status" value="2"/>
</dbReference>
<dbReference type="HAMAP" id="MF_01862">
    <property type="entry name" value="16SrRNA_methyltr_C"/>
    <property type="match status" value="1"/>
</dbReference>
<dbReference type="InterPro" id="IPR002052">
    <property type="entry name" value="DNA_methylase_N6_adenine_CS"/>
</dbReference>
<dbReference type="InterPro" id="IPR013675">
    <property type="entry name" value="Mtase_sm_N"/>
</dbReference>
<dbReference type="InterPro" id="IPR023543">
    <property type="entry name" value="rRNA_ssu_MeTfrase_C"/>
</dbReference>
<dbReference type="InterPro" id="IPR046977">
    <property type="entry name" value="RsmC/RlmG"/>
</dbReference>
<dbReference type="InterPro" id="IPR029063">
    <property type="entry name" value="SAM-dependent_MTases_sf"/>
</dbReference>
<dbReference type="InterPro" id="IPR007848">
    <property type="entry name" value="Small_mtfrase_dom"/>
</dbReference>
<dbReference type="NCBIfam" id="NF007023">
    <property type="entry name" value="PRK09489.1"/>
    <property type="match status" value="1"/>
</dbReference>
<dbReference type="PANTHER" id="PTHR47816">
    <property type="entry name" value="RIBOSOMAL RNA SMALL SUBUNIT METHYLTRANSFERASE C"/>
    <property type="match status" value="1"/>
</dbReference>
<dbReference type="PANTHER" id="PTHR47816:SF4">
    <property type="entry name" value="RIBOSOMAL RNA SMALL SUBUNIT METHYLTRANSFERASE C"/>
    <property type="match status" value="1"/>
</dbReference>
<dbReference type="Pfam" id="PF05175">
    <property type="entry name" value="MTS"/>
    <property type="match status" value="1"/>
</dbReference>
<dbReference type="Pfam" id="PF08468">
    <property type="entry name" value="MTS_N"/>
    <property type="match status" value="1"/>
</dbReference>
<dbReference type="SUPFAM" id="SSF53335">
    <property type="entry name" value="S-adenosyl-L-methionine-dependent methyltransferases"/>
    <property type="match status" value="1"/>
</dbReference>
<name>RSMC_ECOLU</name>
<feature type="chain" id="PRO_0000369707" description="Ribosomal RNA small subunit methyltransferase C">
    <location>
        <begin position="1"/>
        <end position="343"/>
    </location>
</feature>
<proteinExistence type="inferred from homology"/>
<keyword id="KW-0963">Cytoplasm</keyword>
<keyword id="KW-0489">Methyltransferase</keyword>
<keyword id="KW-0698">rRNA processing</keyword>
<keyword id="KW-0949">S-adenosyl-L-methionine</keyword>
<keyword id="KW-0808">Transferase</keyword>
<organism>
    <name type="scientific">Escherichia coli O17:K52:H18 (strain UMN026 / ExPEC)</name>
    <dbReference type="NCBI Taxonomy" id="585056"/>
    <lineage>
        <taxon>Bacteria</taxon>
        <taxon>Pseudomonadati</taxon>
        <taxon>Pseudomonadota</taxon>
        <taxon>Gammaproteobacteria</taxon>
        <taxon>Enterobacterales</taxon>
        <taxon>Enterobacteriaceae</taxon>
        <taxon>Escherichia</taxon>
    </lineage>
</organism>
<comment type="function">
    <text evidence="1">Specifically methylates the guanine in position 1207 of 16S rRNA in the 30S particle.</text>
</comment>
<comment type="catalytic activity">
    <reaction evidence="1">
        <text>guanosine(1207) in 16S rRNA + S-adenosyl-L-methionine = N(2)-methylguanosine(1207) in 16S rRNA + S-adenosyl-L-homocysteine + H(+)</text>
        <dbReference type="Rhea" id="RHEA:42736"/>
        <dbReference type="Rhea" id="RHEA-COMP:10213"/>
        <dbReference type="Rhea" id="RHEA-COMP:10214"/>
        <dbReference type="ChEBI" id="CHEBI:15378"/>
        <dbReference type="ChEBI" id="CHEBI:57856"/>
        <dbReference type="ChEBI" id="CHEBI:59789"/>
        <dbReference type="ChEBI" id="CHEBI:74269"/>
        <dbReference type="ChEBI" id="CHEBI:74481"/>
        <dbReference type="EC" id="2.1.1.172"/>
    </reaction>
</comment>
<comment type="subunit">
    <text evidence="1">Monomer.</text>
</comment>
<comment type="subcellular location">
    <subcellularLocation>
        <location evidence="1">Cytoplasm</location>
    </subcellularLocation>
</comment>
<comment type="similarity">
    <text evidence="1">Belongs to the methyltransferase superfamily. RsmC family.</text>
</comment>
<protein>
    <recommendedName>
        <fullName evidence="1">Ribosomal RNA small subunit methyltransferase C</fullName>
        <ecNumber evidence="1">2.1.1.172</ecNumber>
    </recommendedName>
    <alternativeName>
        <fullName evidence="1">16S rRNA m2G1207 methyltransferase</fullName>
    </alternativeName>
    <alternativeName>
        <fullName evidence="1">rRNA (guanine-N(2)-)-methyltransferase RsmC</fullName>
    </alternativeName>
</protein>